<accession>Q8D5Q4</accession>
<evidence type="ECO:0000255" key="1">
    <source>
        <dbReference type="HAMAP-Rule" id="MF_00544"/>
    </source>
</evidence>
<reference key="1">
    <citation type="submission" date="2002-12" db="EMBL/GenBank/DDBJ databases">
        <title>Complete genome sequence of Vibrio vulnificus CMCP6.</title>
        <authorList>
            <person name="Rhee J.H."/>
            <person name="Kim S.Y."/>
            <person name="Chung S.S."/>
            <person name="Kim J.J."/>
            <person name="Moon Y.H."/>
            <person name="Jeong H."/>
            <person name="Choy H.E."/>
        </authorList>
    </citation>
    <scope>NUCLEOTIDE SEQUENCE [LARGE SCALE GENOMIC DNA]</scope>
    <source>
        <strain>CMCP6</strain>
    </source>
</reference>
<protein>
    <recommendedName>
        <fullName evidence="1">Tryptophanase</fullName>
        <ecNumber evidence="1">4.1.99.1</ecNumber>
    </recommendedName>
    <alternativeName>
        <fullName evidence="1">L-tryptophan indole-lyase</fullName>
        <shortName evidence="1">TNase</shortName>
    </alternativeName>
</protein>
<gene>
    <name evidence="1" type="primary">tnaA</name>
    <name type="ordered locus">VV2_0854</name>
</gene>
<proteinExistence type="inferred from homology"/>
<name>TNAA_VIBVU</name>
<sequence>MDNFKHLPEPFRIRVIEPVKRTTREYREEAILKAGMNPFLLDSEDVFIDLLTDSGTGAITQDMQAAMFRGDEAYSGSRSYHALANAVKDIFGYEFTIPTHQGRGAEQIYIPVLIKKREIEKGLDRSKMVALSNYFFDTTQGHTQINCCVAKNVYTEEAFDTGVKADFKGNFDLEKLEEAILEAGPANVPYIVSTITCNSAGGQPVSLANLKAVYEIAKRYDIPVIMDSARFAENAYFIQQREKDYQNWSIEEITRESYKYADGLAMSAKKDAMVQMGGLLCFKDESFLDVYTECRTLCVVQEGFPTYGGLEGGAMERLAVGLYDGMRQDWLAYRINQVEYLVNGLESIGVVCQQAGGHAAFVDAGKLLPHIPADQFPAHALACELYKVAGIRAVEIGSLLLGRDPATGKQHPCPAELLRLTIPRATYTQTHMDFIIEAFGKVKANAANVKGLEFTYEPQVLRHFTARLKEIDA</sequence>
<comment type="catalytic activity">
    <reaction evidence="1">
        <text>L-tryptophan + H2O = indole + pyruvate + NH4(+)</text>
        <dbReference type="Rhea" id="RHEA:19553"/>
        <dbReference type="ChEBI" id="CHEBI:15361"/>
        <dbReference type="ChEBI" id="CHEBI:15377"/>
        <dbReference type="ChEBI" id="CHEBI:16881"/>
        <dbReference type="ChEBI" id="CHEBI:28938"/>
        <dbReference type="ChEBI" id="CHEBI:57912"/>
        <dbReference type="EC" id="4.1.99.1"/>
    </reaction>
</comment>
<comment type="cofactor">
    <cofactor evidence="1">
        <name>pyridoxal 5'-phosphate</name>
        <dbReference type="ChEBI" id="CHEBI:597326"/>
    </cofactor>
</comment>
<comment type="pathway">
    <text evidence="1">Amino-acid degradation; L-tryptophan degradation via pyruvate pathway; indole and pyruvate from L-tryptophan: step 1/1.</text>
</comment>
<comment type="subunit">
    <text evidence="1">Homotetramer.</text>
</comment>
<comment type="similarity">
    <text evidence="1">Belongs to the beta-eliminating lyase family.</text>
</comment>
<keyword id="KW-0456">Lyase</keyword>
<keyword id="KW-0663">Pyridoxal phosphate</keyword>
<keyword id="KW-0823">Tryptophan catabolism</keyword>
<dbReference type="EC" id="4.1.99.1" evidence="1"/>
<dbReference type="EMBL" id="AE016796">
    <property type="protein sequence ID" value="AAO07777.1"/>
    <property type="molecule type" value="Genomic_DNA"/>
</dbReference>
<dbReference type="RefSeq" id="WP_011081771.1">
    <property type="nucleotide sequence ID" value="NC_004460.2"/>
</dbReference>
<dbReference type="SMR" id="Q8D5Q4"/>
<dbReference type="KEGG" id="vvu:VV2_0854"/>
<dbReference type="HOGENOM" id="CLU_047223_0_0_6"/>
<dbReference type="UniPathway" id="UPA00332">
    <property type="reaction ID" value="UER00452"/>
</dbReference>
<dbReference type="Proteomes" id="UP000002275">
    <property type="component" value="Chromosome 2"/>
</dbReference>
<dbReference type="GO" id="GO:0009034">
    <property type="term" value="F:tryptophanase activity"/>
    <property type="evidence" value="ECO:0007669"/>
    <property type="project" value="UniProtKB-UniRule"/>
</dbReference>
<dbReference type="FunFam" id="3.40.640.10:FF:000039">
    <property type="entry name" value="Tryptophanase"/>
    <property type="match status" value="1"/>
</dbReference>
<dbReference type="Gene3D" id="3.90.1150.10">
    <property type="entry name" value="Aspartate Aminotransferase, domain 1"/>
    <property type="match status" value="1"/>
</dbReference>
<dbReference type="Gene3D" id="3.40.640.10">
    <property type="entry name" value="Type I PLP-dependent aspartate aminotransferase-like (Major domain)"/>
    <property type="match status" value="1"/>
</dbReference>
<dbReference type="HAMAP" id="MF_00544">
    <property type="entry name" value="Tryptophanase"/>
    <property type="match status" value="1"/>
</dbReference>
<dbReference type="InterPro" id="IPR001597">
    <property type="entry name" value="ArAA_b-elim_lyase/Thr_aldolase"/>
</dbReference>
<dbReference type="InterPro" id="IPR011166">
    <property type="entry name" value="Beta-eliminating_lyase"/>
</dbReference>
<dbReference type="InterPro" id="IPR015424">
    <property type="entry name" value="PyrdxlP-dep_Trfase"/>
</dbReference>
<dbReference type="InterPro" id="IPR015421">
    <property type="entry name" value="PyrdxlP-dep_Trfase_major"/>
</dbReference>
<dbReference type="InterPro" id="IPR015422">
    <property type="entry name" value="PyrdxlP-dep_Trfase_small"/>
</dbReference>
<dbReference type="InterPro" id="IPR013440">
    <property type="entry name" value="TNase"/>
</dbReference>
<dbReference type="InterPro" id="IPR018176">
    <property type="entry name" value="Tryptophanase_CS"/>
</dbReference>
<dbReference type="NCBIfam" id="NF009709">
    <property type="entry name" value="PRK13238.1"/>
    <property type="match status" value="1"/>
</dbReference>
<dbReference type="NCBIfam" id="TIGR02617">
    <property type="entry name" value="tnaA_trp_ase"/>
    <property type="match status" value="1"/>
</dbReference>
<dbReference type="PANTHER" id="PTHR32325">
    <property type="entry name" value="BETA-ELIMINATING LYASE-LIKE PROTEIN-RELATED"/>
    <property type="match status" value="1"/>
</dbReference>
<dbReference type="PANTHER" id="PTHR32325:SF4">
    <property type="entry name" value="TRYPTOPHANASE"/>
    <property type="match status" value="1"/>
</dbReference>
<dbReference type="Pfam" id="PF01212">
    <property type="entry name" value="Beta_elim_lyase"/>
    <property type="match status" value="1"/>
</dbReference>
<dbReference type="PIRSF" id="PIRSF001386">
    <property type="entry name" value="Trpase"/>
    <property type="match status" value="1"/>
</dbReference>
<dbReference type="SUPFAM" id="SSF53383">
    <property type="entry name" value="PLP-dependent transferases"/>
    <property type="match status" value="1"/>
</dbReference>
<dbReference type="PROSITE" id="PS00853">
    <property type="entry name" value="BETA_ELIM_LYASE"/>
    <property type="match status" value="1"/>
</dbReference>
<organism>
    <name type="scientific">Vibrio vulnificus (strain CMCP6)</name>
    <dbReference type="NCBI Taxonomy" id="216895"/>
    <lineage>
        <taxon>Bacteria</taxon>
        <taxon>Pseudomonadati</taxon>
        <taxon>Pseudomonadota</taxon>
        <taxon>Gammaproteobacteria</taxon>
        <taxon>Vibrionales</taxon>
        <taxon>Vibrionaceae</taxon>
        <taxon>Vibrio</taxon>
    </lineage>
</organism>
<feature type="chain" id="PRO_0000195627" description="Tryptophanase">
    <location>
        <begin position="1"/>
        <end position="473"/>
    </location>
</feature>
<feature type="modified residue" description="N6-(pyridoxal phosphate)lysine" evidence="1">
    <location>
        <position position="270"/>
    </location>
</feature>